<gene>
    <name evidence="1" type="primary">def</name>
    <name type="ordered locus">SEN3234</name>
</gene>
<reference key="1">
    <citation type="journal article" date="2008" name="Genome Res.">
        <title>Comparative genome analysis of Salmonella enteritidis PT4 and Salmonella gallinarum 287/91 provides insights into evolutionary and host adaptation pathways.</title>
        <authorList>
            <person name="Thomson N.R."/>
            <person name="Clayton D.J."/>
            <person name="Windhorst D."/>
            <person name="Vernikos G."/>
            <person name="Davidson S."/>
            <person name="Churcher C."/>
            <person name="Quail M.A."/>
            <person name="Stevens M."/>
            <person name="Jones M.A."/>
            <person name="Watson M."/>
            <person name="Barron A."/>
            <person name="Layton A."/>
            <person name="Pickard D."/>
            <person name="Kingsley R.A."/>
            <person name="Bignell A."/>
            <person name="Clark L."/>
            <person name="Harris B."/>
            <person name="Ormond D."/>
            <person name="Abdellah Z."/>
            <person name="Brooks K."/>
            <person name="Cherevach I."/>
            <person name="Chillingworth T."/>
            <person name="Woodward J."/>
            <person name="Norberczak H."/>
            <person name="Lord A."/>
            <person name="Arrowsmith C."/>
            <person name="Jagels K."/>
            <person name="Moule S."/>
            <person name="Mungall K."/>
            <person name="Saunders M."/>
            <person name="Whitehead S."/>
            <person name="Chabalgoity J.A."/>
            <person name="Maskell D."/>
            <person name="Humphreys T."/>
            <person name="Roberts M."/>
            <person name="Barrow P.A."/>
            <person name="Dougan G."/>
            <person name="Parkhill J."/>
        </authorList>
    </citation>
    <scope>NUCLEOTIDE SEQUENCE [LARGE SCALE GENOMIC DNA]</scope>
    <source>
        <strain>P125109</strain>
    </source>
</reference>
<feature type="chain" id="PRO_1000097338" description="Peptide deformylase">
    <location>
        <begin position="1"/>
        <end position="169"/>
    </location>
</feature>
<feature type="active site" evidence="1">
    <location>
        <position position="134"/>
    </location>
</feature>
<feature type="binding site" evidence="1">
    <location>
        <position position="91"/>
    </location>
    <ligand>
        <name>Fe cation</name>
        <dbReference type="ChEBI" id="CHEBI:24875"/>
    </ligand>
</feature>
<feature type="binding site" evidence="1">
    <location>
        <position position="133"/>
    </location>
    <ligand>
        <name>Fe cation</name>
        <dbReference type="ChEBI" id="CHEBI:24875"/>
    </ligand>
</feature>
<feature type="binding site" evidence="1">
    <location>
        <position position="137"/>
    </location>
    <ligand>
        <name>Fe cation</name>
        <dbReference type="ChEBI" id="CHEBI:24875"/>
    </ligand>
</feature>
<comment type="function">
    <text evidence="1">Removes the formyl group from the N-terminal Met of newly synthesized proteins. Requires at least a dipeptide for an efficient rate of reaction. N-terminal L-methionine is a prerequisite for activity but the enzyme has broad specificity at other positions.</text>
</comment>
<comment type="catalytic activity">
    <reaction evidence="1">
        <text>N-terminal N-formyl-L-methionyl-[peptide] + H2O = N-terminal L-methionyl-[peptide] + formate</text>
        <dbReference type="Rhea" id="RHEA:24420"/>
        <dbReference type="Rhea" id="RHEA-COMP:10639"/>
        <dbReference type="Rhea" id="RHEA-COMP:10640"/>
        <dbReference type="ChEBI" id="CHEBI:15377"/>
        <dbReference type="ChEBI" id="CHEBI:15740"/>
        <dbReference type="ChEBI" id="CHEBI:49298"/>
        <dbReference type="ChEBI" id="CHEBI:64731"/>
        <dbReference type="EC" id="3.5.1.88"/>
    </reaction>
</comment>
<comment type="cofactor">
    <cofactor evidence="1">
        <name>Fe(2+)</name>
        <dbReference type="ChEBI" id="CHEBI:29033"/>
    </cofactor>
    <text evidence="1">Binds 1 Fe(2+) ion.</text>
</comment>
<comment type="similarity">
    <text evidence="1">Belongs to the polypeptide deformylase family.</text>
</comment>
<dbReference type="EC" id="3.5.1.88" evidence="1"/>
<dbReference type="EMBL" id="AM933172">
    <property type="protein sequence ID" value="CAR34809.1"/>
    <property type="molecule type" value="Genomic_DNA"/>
</dbReference>
<dbReference type="RefSeq" id="WP_000114987.1">
    <property type="nucleotide sequence ID" value="NC_011294.1"/>
</dbReference>
<dbReference type="SMR" id="B5R1E3"/>
<dbReference type="KEGG" id="set:SEN3234"/>
<dbReference type="HOGENOM" id="CLU_061901_2_1_6"/>
<dbReference type="Proteomes" id="UP000000613">
    <property type="component" value="Chromosome"/>
</dbReference>
<dbReference type="GO" id="GO:0046872">
    <property type="term" value="F:metal ion binding"/>
    <property type="evidence" value="ECO:0007669"/>
    <property type="project" value="UniProtKB-KW"/>
</dbReference>
<dbReference type="GO" id="GO:0042586">
    <property type="term" value="F:peptide deformylase activity"/>
    <property type="evidence" value="ECO:0007669"/>
    <property type="project" value="UniProtKB-UniRule"/>
</dbReference>
<dbReference type="GO" id="GO:0043686">
    <property type="term" value="P:co-translational protein modification"/>
    <property type="evidence" value="ECO:0007669"/>
    <property type="project" value="TreeGrafter"/>
</dbReference>
<dbReference type="GO" id="GO:0006412">
    <property type="term" value="P:translation"/>
    <property type="evidence" value="ECO:0007669"/>
    <property type="project" value="UniProtKB-UniRule"/>
</dbReference>
<dbReference type="CDD" id="cd00487">
    <property type="entry name" value="Pep_deformylase"/>
    <property type="match status" value="1"/>
</dbReference>
<dbReference type="FunFam" id="3.90.45.10:FF:000001">
    <property type="entry name" value="Peptide deformylase"/>
    <property type="match status" value="1"/>
</dbReference>
<dbReference type="Gene3D" id="3.90.45.10">
    <property type="entry name" value="Peptide deformylase"/>
    <property type="match status" value="1"/>
</dbReference>
<dbReference type="HAMAP" id="MF_00163">
    <property type="entry name" value="Pep_deformylase"/>
    <property type="match status" value="1"/>
</dbReference>
<dbReference type="InterPro" id="IPR023635">
    <property type="entry name" value="Peptide_deformylase"/>
</dbReference>
<dbReference type="InterPro" id="IPR036821">
    <property type="entry name" value="Peptide_deformylase_sf"/>
</dbReference>
<dbReference type="NCBIfam" id="TIGR00079">
    <property type="entry name" value="pept_deformyl"/>
    <property type="match status" value="1"/>
</dbReference>
<dbReference type="NCBIfam" id="NF001159">
    <property type="entry name" value="PRK00150.1-3"/>
    <property type="match status" value="1"/>
</dbReference>
<dbReference type="PANTHER" id="PTHR10458">
    <property type="entry name" value="PEPTIDE DEFORMYLASE"/>
    <property type="match status" value="1"/>
</dbReference>
<dbReference type="PANTHER" id="PTHR10458:SF21">
    <property type="entry name" value="PEPTIDE DEFORMYLASE"/>
    <property type="match status" value="1"/>
</dbReference>
<dbReference type="Pfam" id="PF01327">
    <property type="entry name" value="Pep_deformylase"/>
    <property type="match status" value="1"/>
</dbReference>
<dbReference type="PIRSF" id="PIRSF004749">
    <property type="entry name" value="Pep_def"/>
    <property type="match status" value="1"/>
</dbReference>
<dbReference type="PRINTS" id="PR01576">
    <property type="entry name" value="PDEFORMYLASE"/>
</dbReference>
<dbReference type="SUPFAM" id="SSF56420">
    <property type="entry name" value="Peptide deformylase"/>
    <property type="match status" value="1"/>
</dbReference>
<accession>B5R1E3</accession>
<proteinExistence type="inferred from homology"/>
<organism>
    <name type="scientific">Salmonella enteritidis PT4 (strain P125109)</name>
    <dbReference type="NCBI Taxonomy" id="550537"/>
    <lineage>
        <taxon>Bacteria</taxon>
        <taxon>Pseudomonadati</taxon>
        <taxon>Pseudomonadota</taxon>
        <taxon>Gammaproteobacteria</taxon>
        <taxon>Enterobacterales</taxon>
        <taxon>Enterobacteriaceae</taxon>
        <taxon>Salmonella</taxon>
    </lineage>
</organism>
<name>DEF_SALEP</name>
<sequence length="169" mass="19282">MSVLQVLHIPDERLRKVAKPVEEVNAEIQRIVDDMFETMYAEEGIGLAATQVDIHQRIIVIDVSENRDERLVLINPELLEKSGETGIEEGCLSIPEQRALVPRAEKVKIRALDRDGNPFELEADGLLAICIQHEMDHLVGKLFIDYLSPLKQQRIRQKVEKLDRLNARA</sequence>
<protein>
    <recommendedName>
        <fullName evidence="1">Peptide deformylase</fullName>
        <shortName evidence="1">PDF</shortName>
        <ecNumber evidence="1">3.5.1.88</ecNumber>
    </recommendedName>
    <alternativeName>
        <fullName evidence="1">Polypeptide deformylase</fullName>
    </alternativeName>
</protein>
<evidence type="ECO:0000255" key="1">
    <source>
        <dbReference type="HAMAP-Rule" id="MF_00163"/>
    </source>
</evidence>
<keyword id="KW-0378">Hydrolase</keyword>
<keyword id="KW-0408">Iron</keyword>
<keyword id="KW-0479">Metal-binding</keyword>
<keyword id="KW-0648">Protein biosynthesis</keyword>